<gene>
    <name evidence="5" type="primary">csh</name>
</gene>
<comment type="function">
    <text evidence="1">Catalyzes the conversion of carbon disulfide into hydrogen sulfide and carbon dioxide, with carbonyl sulfide as an intermediate. Likely plays a key role in sulfur metabolism that allows Acidianus sp. A1-3 to grow on carbon disulfide as the main carbon and energy source. Does not show carbonic anhydrase activity (hydration of CO(2) to carbonate).</text>
</comment>
<comment type="catalytic activity">
    <reaction evidence="1">
        <text>carbon disulfide + 2 H2O = 2 hydrogen sulfide + CO2 + 2 H(+)</text>
        <dbReference type="Rhea" id="RHEA:38143"/>
        <dbReference type="ChEBI" id="CHEBI:15377"/>
        <dbReference type="ChEBI" id="CHEBI:15378"/>
        <dbReference type="ChEBI" id="CHEBI:16526"/>
        <dbReference type="ChEBI" id="CHEBI:23012"/>
        <dbReference type="ChEBI" id="CHEBI:29919"/>
        <dbReference type="EC" id="3.13.1.5"/>
    </reaction>
</comment>
<comment type="cofactor">
    <cofactor evidence="1">
        <name>Zn(2+)</name>
        <dbReference type="ChEBI" id="CHEBI:29105"/>
    </cofactor>
    <text evidence="1">Binds 1 zinc ion per subunit.</text>
</comment>
<comment type="biophysicochemical properties">
    <kinetics>
        <KM evidence="1">130 uM for carbon disulfide</KM>
        <KM evidence="1">22 uM for carbonyl sulfide</KM>
        <Vmax evidence="1">40.0 nmol/min/ug enzyme towards hydrogen sulfide formation from carbon disulfide</Vmax>
        <Vmax evidence="1">74.0 nmol/min/ug enzyme towards hydrogen sulfide formation from carbonyl sulfide</Vmax>
        <text evidence="1">kcat is 952 sec(-1) with carbon disulfide as substrate. kcat is 1800 sec(-1) with the intermediate carbonyl sulfide as substrate.</text>
    </kinetics>
</comment>
<comment type="pathway">
    <text evidence="1">Sulfur metabolism; hydrogen sulfide biosynthesis.</text>
</comment>
<comment type="subunit">
    <text evidence="1 2">Forms a hexadecameric catenane homooligomer, through interactions of two interlocked octameric rings. Exists as both octamers and hexadecamers in solution.</text>
</comment>
<comment type="interaction">
    <interactant intactId="EBI-15949148">
        <id>G0WXL9</id>
    </interactant>
    <interactant intactId="EBI-15949148">
        <id>G0WXL9</id>
        <label>csh</label>
    </interactant>
    <organismsDiffer>false</organismsDiffer>
    <experiments>8</experiments>
</comment>
<comment type="mass spectrometry">
    <text>Monomeric form obtained under denaturing conditions.</text>
</comment>
<comment type="mass spectrometry">
    <text>Octameric ring form.</text>
</comment>
<comment type="mass spectrometry">
    <text>Hexadecameric catenane form.</text>
</comment>
<comment type="similarity">
    <text evidence="4">Belongs to the beta-class carbonic anhydrase family.</text>
</comment>
<name>CS2H_ACIS1</name>
<keyword id="KW-0002">3D-structure</keyword>
<keyword id="KW-0378">Hydrolase</keyword>
<keyword id="KW-0479">Metal-binding</keyword>
<keyword id="KW-0862">Zinc</keyword>
<sequence>MVSEYIDSELKRLEDYALRRVKGIPNNRRLWVLTCMDERVHIEQSLGIQPDDAHIYRNAGGIVTDDAIRSASLTTNFFGTKEIIVVTHTDCGMLRFTGEEVAKYFISKGIKPTEVQLDPLLPAFRISSEEDFIKWFKFYEDLGVKSPDEMALKGVEILRNHPLIPKDVRITGYVYEVETHRLRKPNQIIYNETSKFEHGTIVKE</sequence>
<reference key="1">
    <citation type="journal article" date="2011" name="Nature">
        <title>Evolution of a new enzyme for carbon disulphide conversion by an acidothermophilic archaeon.</title>
        <authorList>
            <person name="Smeulders M.J."/>
            <person name="Barends T.R."/>
            <person name="Pol A."/>
            <person name="Scherer A."/>
            <person name="Zandvoort M.H."/>
            <person name="Udvarhelyi A."/>
            <person name="Khadem A.F."/>
            <person name="Menzel A."/>
            <person name="Hermans J."/>
            <person name="Shoeman R.L."/>
            <person name="Wessels H.J."/>
            <person name="van den Heuvel L.P."/>
            <person name="Russ L."/>
            <person name="Schlichting I."/>
            <person name="Jetten M.S."/>
            <person name="Op den Camp H.J."/>
        </authorList>
    </citation>
    <scope>NUCLEOTIDE SEQUENCE [GENOMIC DNA]</scope>
    <scope>X-RAY CRYSTALLOGRAPHY (2.40 ANGSTROMS) IN COMPLEX WITH ZINC</scope>
    <scope>FUNCTION</scope>
    <scope>CATALYTIC ACTIVITY</scope>
    <scope>COFACTOR</scope>
    <scope>SUBUNIT</scope>
    <scope>BIOPHYSICOCHEMICAL PROPERTIES</scope>
    <scope>SUBSTRATE SPECIFICITY</scope>
    <scope>PATHWAY</scope>
    <scope>MUTAGENESIS OF PHE-77; PHE-78; PHE-96 AND 199-GLY--GLU-204</scope>
    <source>
        <strain evidence="5">A1-3</strain>
    </source>
</reference>
<reference key="2">
    <citation type="journal article" date="2013" name="Chem. Commun. (Camb.)">
        <title>Evidence that the catenane form of CS2 hydrolase is not an artefact.</title>
        <authorList>
            <person name="van Eldijk M.B."/>
            <person name="van Leeuwen I."/>
            <person name="Mikhailov V.A."/>
            <person name="Neijenhuis L."/>
            <person name="Harhangi H.R."/>
            <person name="van Hest J.C."/>
            <person name="Jetten M.S."/>
            <person name="Op den Camp H.J."/>
            <person name="Robinson C.V."/>
            <person name="Mecinovic J."/>
        </authorList>
    </citation>
    <scope>SUBUNIT</scope>
    <scope>MASS SPECTROMETRY</scope>
    <source>
        <strain>A1-3</strain>
    </source>
</reference>
<organism>
    <name type="scientific">Acidianus sp. (strain A1-3)</name>
    <dbReference type="NCBI Taxonomy" id="1071056"/>
    <lineage>
        <taxon>Archaea</taxon>
        <taxon>Thermoproteota</taxon>
        <taxon>Thermoprotei</taxon>
        <taxon>Sulfolobales</taxon>
        <taxon>Sulfolobaceae</taxon>
        <taxon>Acidianus</taxon>
    </lineage>
</organism>
<dbReference type="EC" id="3.13.1.5" evidence="1"/>
<dbReference type="EMBL" id="HM805096">
    <property type="protein sequence ID" value="AEL19654.1"/>
    <property type="molecule type" value="Genomic_DNA"/>
</dbReference>
<dbReference type="PDB" id="3TEN">
    <property type="method" value="X-ray"/>
    <property type="resolution" value="2.60 A"/>
    <property type="chains" value="A/B/C/D/E/F/G/H=1-204"/>
</dbReference>
<dbReference type="PDB" id="3TEO">
    <property type="method" value="X-ray"/>
    <property type="resolution" value="2.40 A"/>
    <property type="chains" value="A/B/C/D/E/F/G/H/I/J/K/L/M/N/O/P=1-204"/>
</dbReference>
<dbReference type="PDBsum" id="3TEN"/>
<dbReference type="PDBsum" id="3TEO"/>
<dbReference type="SMR" id="G0WXL9"/>
<dbReference type="DIP" id="DIP-59165N"/>
<dbReference type="KEGG" id="ag:AEL19654"/>
<dbReference type="BioCyc" id="MetaCyc:MONOMER-18114"/>
<dbReference type="SABIO-RK" id="G0WXL9"/>
<dbReference type="UniPathway" id="UPA00140"/>
<dbReference type="EvolutionaryTrace" id="G0WXL9"/>
<dbReference type="GO" id="GO:0004089">
    <property type="term" value="F:carbonate dehydratase activity"/>
    <property type="evidence" value="ECO:0007669"/>
    <property type="project" value="InterPro"/>
</dbReference>
<dbReference type="GO" id="GO:0016787">
    <property type="term" value="F:hydrolase activity"/>
    <property type="evidence" value="ECO:0007669"/>
    <property type="project" value="UniProtKB-KW"/>
</dbReference>
<dbReference type="GO" id="GO:0042802">
    <property type="term" value="F:identical protein binding"/>
    <property type="evidence" value="ECO:0000353"/>
    <property type="project" value="IntAct"/>
</dbReference>
<dbReference type="GO" id="GO:0008270">
    <property type="term" value="F:zinc ion binding"/>
    <property type="evidence" value="ECO:0007669"/>
    <property type="project" value="InterPro"/>
</dbReference>
<dbReference type="GO" id="GO:0070814">
    <property type="term" value="P:hydrogen sulfide biosynthetic process"/>
    <property type="evidence" value="ECO:0007669"/>
    <property type="project" value="UniProtKB-UniPathway"/>
</dbReference>
<dbReference type="CDD" id="cd03379">
    <property type="entry name" value="beta_CA_cladeD"/>
    <property type="match status" value="1"/>
</dbReference>
<dbReference type="FunFam" id="3.40.1050.10:FF:000027">
    <property type="entry name" value="Carbon disulfide hydrolase"/>
    <property type="match status" value="1"/>
</dbReference>
<dbReference type="Gene3D" id="3.40.1050.10">
    <property type="entry name" value="Carbonic anhydrase"/>
    <property type="match status" value="1"/>
</dbReference>
<dbReference type="InterPro" id="IPR001765">
    <property type="entry name" value="Carbonic_anhydrase"/>
</dbReference>
<dbReference type="InterPro" id="IPR036874">
    <property type="entry name" value="Carbonic_anhydrase_sf"/>
</dbReference>
<dbReference type="PANTHER" id="PTHR43175:SF3">
    <property type="entry name" value="CARBON DISULFIDE HYDROLASE"/>
    <property type="match status" value="1"/>
</dbReference>
<dbReference type="PANTHER" id="PTHR43175">
    <property type="entry name" value="CARBONIC ANHYDRASE"/>
    <property type="match status" value="1"/>
</dbReference>
<dbReference type="Pfam" id="PF00484">
    <property type="entry name" value="Pro_CA"/>
    <property type="match status" value="1"/>
</dbReference>
<dbReference type="SMART" id="SM00947">
    <property type="entry name" value="Pro_CA"/>
    <property type="match status" value="1"/>
</dbReference>
<dbReference type="SUPFAM" id="SSF53056">
    <property type="entry name" value="beta-carbonic anhydrase, cab"/>
    <property type="match status" value="1"/>
</dbReference>
<accession>G0WXL9</accession>
<protein>
    <recommendedName>
        <fullName evidence="3">Carbon disulfide hydrolase</fullName>
        <shortName evidence="3">CS(2) hydrolase</shortName>
        <ecNumber evidence="1">3.13.1.5</ecNumber>
    </recommendedName>
    <alternativeName>
        <fullName evidence="4">Carbon disulfide lyase</fullName>
    </alternativeName>
</protein>
<feature type="chain" id="PRO_0000430808" description="Carbon disulfide hydrolase">
    <location>
        <begin position="1"/>
        <end position="204"/>
    </location>
</feature>
<feature type="binding site" evidence="1 6">
    <location>
        <position position="35"/>
    </location>
    <ligand>
        <name>Zn(2+)</name>
        <dbReference type="ChEBI" id="CHEBI:29105"/>
    </ligand>
</feature>
<feature type="binding site" evidence="1 6">
    <location>
        <position position="88"/>
    </location>
    <ligand>
        <name>Zn(2+)</name>
        <dbReference type="ChEBI" id="CHEBI:29105"/>
    </ligand>
</feature>
<feature type="binding site" evidence="1 6">
    <location>
        <position position="91"/>
    </location>
    <ligand>
        <name>Zn(2+)</name>
        <dbReference type="ChEBI" id="CHEBI:29105"/>
    </ligand>
</feature>
<feature type="mutagenesis site" description="Increases catalytic efficiency." evidence="1">
    <original>F</original>
    <variation>A</variation>
    <location>
        <position position="77"/>
    </location>
</feature>
<feature type="mutagenesis site" description="Nearly abolishes catalytic activity." evidence="1">
    <original>F</original>
    <variation>Y</variation>
    <variation>A</variation>
    <variation>W</variation>
    <location>
        <position position="78"/>
    </location>
</feature>
<feature type="mutagenesis site" description="Increases catalytic activity." evidence="1">
    <original>F</original>
    <variation>S</variation>
    <location>
        <position position="96"/>
    </location>
</feature>
<feature type="mutagenesis site" description="Increases catalytic efficiency." evidence="1">
    <location>
        <begin position="199"/>
        <end position="204"/>
    </location>
</feature>
<feature type="helix" evidence="8">
    <location>
        <begin position="3"/>
        <end position="17"/>
    </location>
</feature>
<feature type="helix" evidence="8">
    <location>
        <begin position="19"/>
        <end position="22"/>
    </location>
</feature>
<feature type="strand" evidence="8">
    <location>
        <begin position="30"/>
        <end position="35"/>
    </location>
</feature>
<feature type="helix" evidence="8">
    <location>
        <begin position="42"/>
        <end position="46"/>
    </location>
</feature>
<feature type="strand" evidence="8">
    <location>
        <begin position="52"/>
        <end position="61"/>
    </location>
</feature>
<feature type="helix" evidence="8">
    <location>
        <begin position="65"/>
        <end position="77"/>
    </location>
</feature>
<feature type="strand" evidence="8">
    <location>
        <begin position="82"/>
        <end position="88"/>
    </location>
</feature>
<feature type="helix" evidence="8">
    <location>
        <begin position="92"/>
        <end position="94"/>
    </location>
</feature>
<feature type="helix" evidence="8">
    <location>
        <begin position="98"/>
        <end position="106"/>
    </location>
</feature>
<feature type="turn" evidence="8">
    <location>
        <begin position="107"/>
        <end position="109"/>
    </location>
</feature>
<feature type="turn" evidence="8">
    <location>
        <begin position="112"/>
        <end position="114"/>
    </location>
</feature>
<feature type="helix" evidence="8">
    <location>
        <begin position="129"/>
        <end position="135"/>
    </location>
</feature>
<feature type="helix" evidence="8">
    <location>
        <begin position="139"/>
        <end position="142"/>
    </location>
</feature>
<feature type="helix" evidence="8">
    <location>
        <begin position="147"/>
        <end position="160"/>
    </location>
</feature>
<feature type="strand" evidence="8">
    <location>
        <begin position="168"/>
        <end position="175"/>
    </location>
</feature>
<feature type="turn" evidence="8">
    <location>
        <begin position="177"/>
        <end position="179"/>
    </location>
</feature>
<feature type="strand" evidence="7">
    <location>
        <begin position="181"/>
        <end position="183"/>
    </location>
</feature>
<feature type="helix" evidence="8">
    <location>
        <begin position="192"/>
        <end position="194"/>
    </location>
</feature>
<proteinExistence type="evidence at protein level"/>
<evidence type="ECO:0000269" key="1">
    <source>
    </source>
</evidence>
<evidence type="ECO:0000269" key="2">
    <source>
    </source>
</evidence>
<evidence type="ECO:0000303" key="3">
    <source>
    </source>
</evidence>
<evidence type="ECO:0000305" key="4"/>
<evidence type="ECO:0000312" key="5">
    <source>
        <dbReference type="EMBL" id="AEL19654.1"/>
    </source>
</evidence>
<evidence type="ECO:0000312" key="6">
    <source>
        <dbReference type="PDB" id="3TEN"/>
    </source>
</evidence>
<evidence type="ECO:0007829" key="7">
    <source>
        <dbReference type="PDB" id="3TEN"/>
    </source>
</evidence>
<evidence type="ECO:0007829" key="8">
    <source>
        <dbReference type="PDB" id="3TEO"/>
    </source>
</evidence>